<dbReference type="EC" id="2.7.7.6" evidence="1"/>
<dbReference type="EMBL" id="CP000386">
    <property type="protein sequence ID" value="ABG05106.1"/>
    <property type="molecule type" value="Genomic_DNA"/>
</dbReference>
<dbReference type="SMR" id="Q1AU22"/>
<dbReference type="STRING" id="266117.Rxyl_2162"/>
<dbReference type="KEGG" id="rxy:Rxyl_2162"/>
<dbReference type="eggNOG" id="COG0085">
    <property type="taxonomic scope" value="Bacteria"/>
</dbReference>
<dbReference type="HOGENOM" id="CLU_000524_4_3_11"/>
<dbReference type="OrthoDB" id="9803954at2"/>
<dbReference type="PhylomeDB" id="Q1AU22"/>
<dbReference type="Proteomes" id="UP000006637">
    <property type="component" value="Chromosome"/>
</dbReference>
<dbReference type="GO" id="GO:0000428">
    <property type="term" value="C:DNA-directed RNA polymerase complex"/>
    <property type="evidence" value="ECO:0007669"/>
    <property type="project" value="UniProtKB-KW"/>
</dbReference>
<dbReference type="GO" id="GO:0003677">
    <property type="term" value="F:DNA binding"/>
    <property type="evidence" value="ECO:0007669"/>
    <property type="project" value="UniProtKB-UniRule"/>
</dbReference>
<dbReference type="GO" id="GO:0003899">
    <property type="term" value="F:DNA-directed RNA polymerase activity"/>
    <property type="evidence" value="ECO:0007669"/>
    <property type="project" value="UniProtKB-UniRule"/>
</dbReference>
<dbReference type="GO" id="GO:0032549">
    <property type="term" value="F:ribonucleoside binding"/>
    <property type="evidence" value="ECO:0007669"/>
    <property type="project" value="InterPro"/>
</dbReference>
<dbReference type="GO" id="GO:0006351">
    <property type="term" value="P:DNA-templated transcription"/>
    <property type="evidence" value="ECO:0007669"/>
    <property type="project" value="UniProtKB-UniRule"/>
</dbReference>
<dbReference type="CDD" id="cd00653">
    <property type="entry name" value="RNA_pol_B_RPB2"/>
    <property type="match status" value="1"/>
</dbReference>
<dbReference type="Gene3D" id="2.40.50.100">
    <property type="match status" value="1"/>
</dbReference>
<dbReference type="Gene3D" id="2.40.50.150">
    <property type="match status" value="1"/>
</dbReference>
<dbReference type="Gene3D" id="3.90.1100.10">
    <property type="match status" value="1"/>
</dbReference>
<dbReference type="Gene3D" id="2.30.150.10">
    <property type="entry name" value="DNA-directed RNA polymerase, beta subunit, external 1 domain"/>
    <property type="match status" value="1"/>
</dbReference>
<dbReference type="Gene3D" id="2.40.270.10">
    <property type="entry name" value="DNA-directed RNA polymerase, subunit 2, domain 6"/>
    <property type="match status" value="2"/>
</dbReference>
<dbReference type="Gene3D" id="3.90.1800.10">
    <property type="entry name" value="RNA polymerase alpha subunit dimerisation domain"/>
    <property type="match status" value="1"/>
</dbReference>
<dbReference type="Gene3D" id="3.90.1110.10">
    <property type="entry name" value="RNA polymerase Rpb2, domain 2"/>
    <property type="match status" value="1"/>
</dbReference>
<dbReference type="HAMAP" id="MF_01321">
    <property type="entry name" value="RNApol_bact_RpoB"/>
    <property type="match status" value="1"/>
</dbReference>
<dbReference type="InterPro" id="IPR042107">
    <property type="entry name" value="DNA-dir_RNA_pol_bsu_ext_1_sf"/>
</dbReference>
<dbReference type="InterPro" id="IPR019462">
    <property type="entry name" value="DNA-dir_RNA_pol_bsu_external_1"/>
</dbReference>
<dbReference type="InterPro" id="IPR015712">
    <property type="entry name" value="DNA-dir_RNA_pol_su2"/>
</dbReference>
<dbReference type="InterPro" id="IPR007120">
    <property type="entry name" value="DNA-dir_RNAP_su2_dom"/>
</dbReference>
<dbReference type="InterPro" id="IPR037033">
    <property type="entry name" value="DNA-dir_RNAP_su2_hyb_sf"/>
</dbReference>
<dbReference type="InterPro" id="IPR010243">
    <property type="entry name" value="RNA_pol_bsu_bac"/>
</dbReference>
<dbReference type="InterPro" id="IPR007121">
    <property type="entry name" value="RNA_pol_bsu_CS"/>
</dbReference>
<dbReference type="InterPro" id="IPR007644">
    <property type="entry name" value="RNA_pol_bsu_protrusion"/>
</dbReference>
<dbReference type="InterPro" id="IPR007642">
    <property type="entry name" value="RNA_pol_Rpb2_2"/>
</dbReference>
<dbReference type="InterPro" id="IPR037034">
    <property type="entry name" value="RNA_pol_Rpb2_2_sf"/>
</dbReference>
<dbReference type="InterPro" id="IPR007645">
    <property type="entry name" value="RNA_pol_Rpb2_3"/>
</dbReference>
<dbReference type="InterPro" id="IPR007641">
    <property type="entry name" value="RNA_pol_Rpb2_7"/>
</dbReference>
<dbReference type="InterPro" id="IPR014724">
    <property type="entry name" value="RNA_pol_RPB2_OB-fold"/>
</dbReference>
<dbReference type="NCBIfam" id="NF001616">
    <property type="entry name" value="PRK00405.1"/>
    <property type="match status" value="1"/>
</dbReference>
<dbReference type="NCBIfam" id="TIGR02013">
    <property type="entry name" value="rpoB"/>
    <property type="match status" value="1"/>
</dbReference>
<dbReference type="PANTHER" id="PTHR20856">
    <property type="entry name" value="DNA-DIRECTED RNA POLYMERASE I SUBUNIT 2"/>
    <property type="match status" value="1"/>
</dbReference>
<dbReference type="Pfam" id="PF04563">
    <property type="entry name" value="RNA_pol_Rpb2_1"/>
    <property type="match status" value="1"/>
</dbReference>
<dbReference type="Pfam" id="PF04561">
    <property type="entry name" value="RNA_pol_Rpb2_2"/>
    <property type="match status" value="1"/>
</dbReference>
<dbReference type="Pfam" id="PF04565">
    <property type="entry name" value="RNA_pol_Rpb2_3"/>
    <property type="match status" value="1"/>
</dbReference>
<dbReference type="Pfam" id="PF10385">
    <property type="entry name" value="RNA_pol_Rpb2_45"/>
    <property type="match status" value="1"/>
</dbReference>
<dbReference type="Pfam" id="PF00562">
    <property type="entry name" value="RNA_pol_Rpb2_6"/>
    <property type="match status" value="1"/>
</dbReference>
<dbReference type="Pfam" id="PF04560">
    <property type="entry name" value="RNA_pol_Rpb2_7"/>
    <property type="match status" value="1"/>
</dbReference>
<dbReference type="SUPFAM" id="SSF64484">
    <property type="entry name" value="beta and beta-prime subunits of DNA dependent RNA-polymerase"/>
    <property type="match status" value="1"/>
</dbReference>
<dbReference type="PROSITE" id="PS01166">
    <property type="entry name" value="RNA_POL_BETA"/>
    <property type="match status" value="1"/>
</dbReference>
<comment type="function">
    <text evidence="1">DNA-dependent RNA polymerase catalyzes the transcription of DNA into RNA using the four ribonucleoside triphosphates as substrates.</text>
</comment>
<comment type="catalytic activity">
    <reaction evidence="1">
        <text>RNA(n) + a ribonucleoside 5'-triphosphate = RNA(n+1) + diphosphate</text>
        <dbReference type="Rhea" id="RHEA:21248"/>
        <dbReference type="Rhea" id="RHEA-COMP:14527"/>
        <dbReference type="Rhea" id="RHEA-COMP:17342"/>
        <dbReference type="ChEBI" id="CHEBI:33019"/>
        <dbReference type="ChEBI" id="CHEBI:61557"/>
        <dbReference type="ChEBI" id="CHEBI:140395"/>
        <dbReference type="EC" id="2.7.7.6"/>
    </reaction>
</comment>
<comment type="subunit">
    <text evidence="1">The RNAP catalytic core consists of 2 alpha, 1 beta, 1 beta' and 1 omega subunit. When a sigma factor is associated with the core the holoenzyme is formed, which can initiate transcription.</text>
</comment>
<comment type="similarity">
    <text evidence="1">Belongs to the RNA polymerase beta chain family.</text>
</comment>
<evidence type="ECO:0000255" key="1">
    <source>
        <dbReference type="HAMAP-Rule" id="MF_01321"/>
    </source>
</evidence>
<evidence type="ECO:0000256" key="2">
    <source>
        <dbReference type="SAM" id="MobiDB-lite"/>
    </source>
</evidence>
<gene>
    <name evidence="1" type="primary">rpoB</name>
    <name type="ordered locus">Rxyl_2162</name>
</gene>
<reference key="1">
    <citation type="submission" date="2006-06" db="EMBL/GenBank/DDBJ databases">
        <title>Complete sequence of Rubrobacter xylanophilus DSM 9941.</title>
        <authorList>
            <consortium name="US DOE Joint Genome Institute"/>
            <person name="Copeland A."/>
            <person name="Lucas S."/>
            <person name="Lapidus A."/>
            <person name="Barry K."/>
            <person name="Detter J.C."/>
            <person name="Glavina del Rio T."/>
            <person name="Hammon N."/>
            <person name="Israni S."/>
            <person name="Dalin E."/>
            <person name="Tice H."/>
            <person name="Pitluck S."/>
            <person name="Munk A.C."/>
            <person name="Brettin T."/>
            <person name="Bruce D."/>
            <person name="Han C."/>
            <person name="Tapia R."/>
            <person name="Gilna P."/>
            <person name="Schmutz J."/>
            <person name="Larimer F."/>
            <person name="Land M."/>
            <person name="Hauser L."/>
            <person name="Kyrpides N."/>
            <person name="Lykidis A."/>
            <person name="da Costa M.S."/>
            <person name="Rainey F.A."/>
            <person name="Empadinhas N."/>
            <person name="Jolivet E."/>
            <person name="Battista J.R."/>
            <person name="Richardson P."/>
        </authorList>
    </citation>
    <scope>NUCLEOTIDE SEQUENCE [LARGE SCALE GENOMIC DNA]</scope>
    <source>
        <strain>DSM 9941 / JCM 11954 / NBRC 16129 / PRD-1</strain>
    </source>
</reference>
<accession>Q1AU22</accession>
<feature type="chain" id="PRO_0000300392" description="DNA-directed RNA polymerase subunit beta">
    <location>
        <begin position="1"/>
        <end position="1141"/>
    </location>
</feature>
<feature type="region of interest" description="Disordered" evidence="2">
    <location>
        <begin position="1117"/>
        <end position="1141"/>
    </location>
</feature>
<organism>
    <name type="scientific">Rubrobacter xylanophilus (strain DSM 9941 / JCM 11954 / NBRC 16129 / PRD-1)</name>
    <dbReference type="NCBI Taxonomy" id="266117"/>
    <lineage>
        <taxon>Bacteria</taxon>
        <taxon>Bacillati</taxon>
        <taxon>Actinomycetota</taxon>
        <taxon>Rubrobacteria</taxon>
        <taxon>Rubrobacterales</taxon>
        <taxon>Rubrobacteraceae</taxon>
        <taxon>Rubrobacter</taxon>
    </lineage>
</organism>
<protein>
    <recommendedName>
        <fullName evidence="1">DNA-directed RNA polymerase subunit beta</fullName>
        <shortName evidence="1">RNAP subunit beta</shortName>
        <ecNumber evidence="1">2.7.7.6</ecNumber>
    </recommendedName>
    <alternativeName>
        <fullName evidence="1">RNA polymerase subunit beta</fullName>
    </alternativeName>
    <alternativeName>
        <fullName evidence="1">Transcriptase subunit beta</fullName>
    </alternativeName>
</protein>
<keyword id="KW-0240">DNA-directed RNA polymerase</keyword>
<keyword id="KW-0548">Nucleotidyltransferase</keyword>
<keyword id="KW-1185">Reference proteome</keyword>
<keyword id="KW-0804">Transcription</keyword>
<keyword id="KW-0808">Transferase</keyword>
<proteinExistence type="inferred from homology"/>
<name>RPOB_RUBXD</name>
<sequence length="1141" mass="127103">MRVRPFFNDSSWRRANLVTPIVRRKRHSYARLQSADAQLPNLIQIQLSSFQKFMDEGIRRTLEDISPIEDYSGSYAVEFGEHRFEEPPVSIEECMSKDKTYAAPLFVRVRFVIKETGEVREQDVFMGDFPLMTDWGTFIINGTERVVVTQLVRSPGAYVMEPKDPTKQVLTASLMPHRGSWLEFEVETKGYVSVRIDRKRKLPVTVLLKALGFGGPEEILARFGNSWLIRNTLERDDTTSREDALLEVFRRQRPGEPVNLENAQNLVDGLFFDPKRYDLSEVGRYKVNKKLRLDVPRDVHTLTIEDIEGLLRRLLGIAEEVAEEEEFGRINYERIRHKLDEYEHFGNRRLRTVGELVQEAFRIGMYRMERVVRERMTTQDEESITPQTVVNTKPVASAIKEFFGSSQLSQFMDQTNTLAGLSHRRRLNAMGAGGLSRERAPIEVRDVHPTHYGRMCPIETPEGPNIGLIGQLSTFARVNEYGFVQTPYRKVEDGRVTDEVEYLSADEEEEYTIAQANTPVDLETGRITAETVLARSRGGDVTTVSPEEVDYMDVSPVQTVSVATSLIPFLEHDDANRALMGANMQRQAVPLLRSEAPYVGTGMEFRAATDTGDVLLARNAGTVERVTASRIVVRREDGGLDEYALRKFARSNQGTCVNQRPLVKEGEEVEAGTVLADGSSTDQGELALGKNLLVAFMPWEGYNFEDAIIISERLVKEDVLTSIHIEEYEVQARDTKLGPEEITRDIPHASDDVLMNLDADGIIRIGAEVSSGDVLVGKVTPKGESEPTPEEKLLRAIFGEKAREVKDSSLKVPHGEGGVVIDVKRFSREAGDDLPPGVNEMVRVFVATKRKIAEGDKLAGRHGNKGVISKIVPEEDMPFMEDGTPVDVILSPLGVPSRMNIGQILETHLGWAASKGLGENGGEPVFVSTPVFSGATVADINEAIDKVRRNGAAEVGMSGGGKVTLYDGRTGEPFENKITVGYMYILKLLHLVDDKIHARSTGPYSLVTQQPLGGKAQFGGQRFGEMEVWALEAYGAAHTLQELLTIKSDDRVGRVKSYEAIVKGENIPSPSVPASFKVLLKEMQSLGLSVKPIYDVEAVSEEDQERRDWDEAARALGINISREEPPGQLDDTPDTFSRGGM</sequence>